<protein>
    <recommendedName>
        <fullName>Alpha-S1-casein</fullName>
    </recommendedName>
</protein>
<reference key="1">
    <citation type="journal article" date="1985" name="Biochimie">
        <title>Construction and identification of recombinant plasmids carrying cDNAs coding for ovine alpha S1-, alpha S2-, beta-, kappa-casein and beta-lactoglobulin. Nucleotide sequence of alpha S1-casein cDNA.</title>
        <authorList>
            <person name="Mercier J.-C."/>
            <person name="Gaye P."/>
            <person name="Soulier S."/>
            <person name="Hue-Delahaie D."/>
            <person name="Vilotte J.-L."/>
        </authorList>
    </citation>
    <scope>NUCLEOTIDE SEQUENCE [MRNA] (C ALLELE; ISOFORM 2)</scope>
</reference>
<reference key="2">
    <citation type="journal article" date="1995" name="J. Dairy Res.">
        <title>Primary structure of ovine alpha s1-caseins: localization of phosphorylation sites and characterization of genetic variants A, C and D.</title>
        <authorList>
            <person name="Ferranti P."/>
            <person name="Malorni A."/>
            <person name="Nitti G."/>
            <person name="Laezza P."/>
            <person name="Pizzano R."/>
            <person name="Chianese L."/>
            <person name="Addeo F."/>
        </authorList>
    </citation>
    <scope>PROTEIN SEQUENCE OF 16-214 (A; C AND D ALLELES; ISOFORMS 1 AND 2)</scope>
    <scope>PHOSPHORYLATION AT SER-27; SER-56; SER-61; SER-63; SER-79; SER-80; SER-81; SER-82; SER-83; SER-90 AND SER-130</scope>
    <scope>MASS SPECTROMETRY</scope>
    <source>
        <tissue>Milk</tissue>
    </source>
</reference>
<reference key="3">
    <citation type="journal article" date="2004" name="J. Dairy Sci.">
        <title>Single nucleotide polymorphisms in the ovine casein genes detected by polymerase chain reaction-single strand conformation polymorphism.</title>
        <authorList>
            <person name="Ceriotti G."/>
            <person name="Chessa S."/>
            <person name="Bolla P."/>
            <person name="Budelli E."/>
            <person name="Bianchi L."/>
            <person name="Duranti E."/>
            <person name="Caroli A."/>
        </authorList>
    </citation>
    <scope>VARIANT THR-209</scope>
    <source>
        <strain>Comisana</strain>
        <strain>Sarda</strain>
        <strain>Sopravissana</strain>
        <tissue>Blood</tissue>
    </source>
</reference>
<sequence length="214" mass="24306">MKLLILTCLVAVALARPKHPIKHQGLSSEVLNENLLRFVVAPFPEVFRKENINELSKDIGSESIEDQAMEDAKQMKAGSSSSSEEIVPNSAEQKYIQKEDVPSERYLGYLEQLLRLKKYNVPQLEIVPKSAEEQLHSMKEGNPAHQKQPMIAVNQELAYFYPQLFRQFYQLDAYPSGAWYYLPLGTQYTDAPSFSDIPNPIGSENSGKITMPLW</sequence>
<name>CASA1_SHEEP</name>
<gene>
    <name type="primary">CSN1S1</name>
</gene>
<comment type="function">
    <text>Important role in the capacity of milk to transport calcium phosphate.</text>
</comment>
<comment type="subcellular location">
    <subcellularLocation>
        <location>Secreted</location>
    </subcellularLocation>
</comment>
<comment type="alternative products">
    <event type="alternative splicing"/>
    <isoform>
        <id>P04653-2</id>
        <name>1</name>
        <name>Long</name>
        <sequence type="displayed"/>
    </isoform>
    <isoform>
        <id>P04653-1</id>
        <name>2</name>
        <name>Short</name>
        <sequence type="described" ref="VSP_012408"/>
    </isoform>
</comment>
<comment type="tissue specificity">
    <text>Mammary gland specific. Secreted in milk.</text>
</comment>
<comment type="mass spectrometry" mass="23638.14" error="3.0" method="Electrospray" evidence="3">
    <molecule>Isoform 1</molecule>
    <text>Allele A, with 11 phosphate groups. The measured range is 16-214.</text>
</comment>
<comment type="mass spectrometry" mass="22620.0" error="1.6" method="Electrospray" evidence="3">
    <molecule>Isoform 2</molecule>
    <text>Allele A, with 11 phosphate groups. The measured range is 16-206.</text>
</comment>
<comment type="mass spectrometry" mass="23561.8" error="2.3" method="Electrospray" evidence="3">
    <molecule>Isoform 1</molecule>
    <text>Allele C, with 10 phosphate groups. The measured range is 16-206.</text>
</comment>
<comment type="mass spectrometry" mass="22551.8" error="2.2" method="Electrospray" evidence="3">
    <molecule>Isoform 2</molecule>
    <text>Allele C, with 10 phosphate groups. The measured range is 16-206.</text>
</comment>
<comment type="mass spectrometry" mass="23290.2" error="2.9" method="Electrospray" evidence="3">
    <molecule>Isoform 1</molecule>
    <text>Allele D, with 6 phosphate groups. The measured range is 16-214.</text>
</comment>
<comment type="mass spectrometry" mass="22629.0" error="1.6" method="Electrospray" evidence="3">
    <molecule>Isoform 2</molecule>
    <text>Allele D, with 6 phosphate groups. The measured range is 16-214.</text>
</comment>
<comment type="polymorphism">
    <text>At least four alleles are known. The sequence shown is that of allele A. The frequency of variant Thr-209 is 0.263, 0.122 and 0.191 in Italian breeds Comisana, Sarda and Sopravissana, respectively.</text>
</comment>
<comment type="similarity">
    <text evidence="4">Belongs to the alpha-casein family.</text>
</comment>
<keyword id="KW-0025">Alternative splicing</keyword>
<keyword id="KW-0903">Direct protein sequencing</keyword>
<keyword id="KW-0494">Milk protein</keyword>
<keyword id="KW-0597">Phosphoprotein</keyword>
<keyword id="KW-1185">Reference proteome</keyword>
<keyword id="KW-0964">Secreted</keyword>
<keyword id="KW-0732">Signal</keyword>
<feature type="signal peptide" evidence="3">
    <location>
        <begin position="1"/>
        <end position="15"/>
    </location>
</feature>
<feature type="chain" id="PRO_0000004459" description="Alpha-S1-casein">
    <location>
        <begin position="16"/>
        <end position="214"/>
    </location>
</feature>
<feature type="region of interest" description="Disordered" evidence="1">
    <location>
        <begin position="69"/>
        <end position="91"/>
    </location>
</feature>
<feature type="region of interest" description="Opioid-like peptide sequence">
    <location>
        <begin position="105"/>
        <end position="111"/>
    </location>
</feature>
<feature type="modified residue" description="Phosphoserine; in allele A" evidence="3">
    <location>
        <position position="27"/>
    </location>
</feature>
<feature type="modified residue" description="Phosphoserine; in allele C" evidence="3">
    <location>
        <position position="56"/>
    </location>
</feature>
<feature type="modified residue" description="Phosphoserine" evidence="3">
    <location>
        <position position="61"/>
    </location>
</feature>
<feature type="modified residue" description="Phosphoserine" evidence="3">
    <location>
        <position position="63"/>
    </location>
</feature>
<feature type="modified residue" description="Phosphoserine; in alleles A and C" evidence="3">
    <location>
        <position position="79"/>
    </location>
</feature>
<feature type="modified residue" description="Phosphoserine" evidence="3">
    <location>
        <position position="80"/>
    </location>
</feature>
<feature type="modified residue" description="Phosphoserine; in alleles A and C" evidence="3">
    <location>
        <position position="81"/>
    </location>
</feature>
<feature type="modified residue" description="Phosphoserine" evidence="3">
    <location>
        <position position="82"/>
    </location>
</feature>
<feature type="modified residue" description="Phosphoserine; in alleles A and C" evidence="3">
    <location>
        <position position="83"/>
    </location>
</feature>
<feature type="modified residue" description="Phosphoserine" evidence="3">
    <location>
        <position position="90"/>
    </location>
</feature>
<feature type="modified residue" description="Phosphoserine" evidence="3">
    <location>
        <position position="130"/>
    </location>
</feature>
<feature type="splice variant" id="VSP_012408" description="In isoform 2." evidence="4">
    <location>
        <begin position="156"/>
        <end position="163"/>
    </location>
</feature>
<feature type="sequence variant" description="In allele C and allele D.">
    <original>S</original>
    <variation>P</variation>
    <location>
        <position position="28"/>
    </location>
</feature>
<feature type="sequence variant" description="In allele D.">
    <original>S</original>
    <variation>N</variation>
    <location>
        <position position="83"/>
    </location>
</feature>
<feature type="sequence variant" evidence="2">
    <original>I</original>
    <variation>T</variation>
    <location>
        <position position="209"/>
    </location>
</feature>
<proteinExistence type="evidence at protein level"/>
<evidence type="ECO:0000256" key="1">
    <source>
        <dbReference type="SAM" id="MobiDB-lite"/>
    </source>
</evidence>
<evidence type="ECO:0000269" key="2">
    <source>
    </source>
</evidence>
<evidence type="ECO:0000269" key="3">
    <source>
    </source>
</evidence>
<evidence type="ECO:0000305" key="4"/>
<dbReference type="EMBL" id="X03237">
    <property type="protein sequence ID" value="CAA26982.1"/>
    <property type="molecule type" value="mRNA"/>
</dbReference>
<dbReference type="EMBL" id="AY444506">
    <property type="protein sequence ID" value="AAS17944.1"/>
    <property type="molecule type" value="Genomic_DNA"/>
</dbReference>
<dbReference type="PIR" id="A25069">
    <property type="entry name" value="KASHS1"/>
</dbReference>
<dbReference type="RefSeq" id="NP_001009795.1">
    <property type="nucleotide sequence ID" value="NM_001009795.1"/>
</dbReference>
<dbReference type="STRING" id="9940.ENSOARP00000011026"/>
<dbReference type="Allergome" id="1241">
    <property type="allergen name" value="Ovi a 8"/>
</dbReference>
<dbReference type="Allergome" id="2962">
    <property type="allergen name" value="Ovi a 9"/>
</dbReference>
<dbReference type="iPTMnet" id="P04653"/>
<dbReference type="PaxDb" id="9940-ENSOARP00000011026"/>
<dbReference type="GeneID" id="443382"/>
<dbReference type="KEGG" id="oas:443382"/>
<dbReference type="CTD" id="1446"/>
<dbReference type="eggNOG" id="ENOG502TEWT">
    <property type="taxonomic scope" value="Eukaryota"/>
</dbReference>
<dbReference type="OrthoDB" id="9635074at2759"/>
<dbReference type="Proteomes" id="UP000002356">
    <property type="component" value="Unplaced"/>
</dbReference>
<dbReference type="GO" id="GO:0005615">
    <property type="term" value="C:extracellular space"/>
    <property type="evidence" value="ECO:0007669"/>
    <property type="project" value="TreeGrafter"/>
</dbReference>
<dbReference type="GO" id="GO:1903496">
    <property type="term" value="P:response to 11-deoxycorticosterone"/>
    <property type="evidence" value="ECO:0007669"/>
    <property type="project" value="TreeGrafter"/>
</dbReference>
<dbReference type="GO" id="GO:1903494">
    <property type="term" value="P:response to dehydroepiandrosterone"/>
    <property type="evidence" value="ECO:0007669"/>
    <property type="project" value="TreeGrafter"/>
</dbReference>
<dbReference type="GO" id="GO:0032355">
    <property type="term" value="P:response to estradiol"/>
    <property type="evidence" value="ECO:0007669"/>
    <property type="project" value="TreeGrafter"/>
</dbReference>
<dbReference type="GO" id="GO:0032570">
    <property type="term" value="P:response to progesterone"/>
    <property type="evidence" value="ECO:0007669"/>
    <property type="project" value="TreeGrafter"/>
</dbReference>
<dbReference type="InterPro" id="IPR026999">
    <property type="entry name" value="Alpha-s1_casein"/>
</dbReference>
<dbReference type="InterPro" id="IPR001588">
    <property type="entry name" value="Casein"/>
</dbReference>
<dbReference type="InterPro" id="IPR031305">
    <property type="entry name" value="Casein_CS"/>
</dbReference>
<dbReference type="PANTHER" id="PTHR10240">
    <property type="entry name" value="ALPHA-S1-CASEIN"/>
    <property type="match status" value="1"/>
</dbReference>
<dbReference type="PANTHER" id="PTHR10240:SF0">
    <property type="entry name" value="ALPHA-S1-CASEIN"/>
    <property type="match status" value="1"/>
</dbReference>
<dbReference type="Pfam" id="PF00363">
    <property type="entry name" value="Casein"/>
    <property type="match status" value="1"/>
</dbReference>
<dbReference type="PROSITE" id="PS00306">
    <property type="entry name" value="CASEIN_ALPHA_BETA"/>
    <property type="match status" value="1"/>
</dbReference>
<organism>
    <name type="scientific">Ovis aries</name>
    <name type="common">Sheep</name>
    <dbReference type="NCBI Taxonomy" id="9940"/>
    <lineage>
        <taxon>Eukaryota</taxon>
        <taxon>Metazoa</taxon>
        <taxon>Chordata</taxon>
        <taxon>Craniata</taxon>
        <taxon>Vertebrata</taxon>
        <taxon>Euteleostomi</taxon>
        <taxon>Mammalia</taxon>
        <taxon>Eutheria</taxon>
        <taxon>Laurasiatheria</taxon>
        <taxon>Artiodactyla</taxon>
        <taxon>Ruminantia</taxon>
        <taxon>Pecora</taxon>
        <taxon>Bovidae</taxon>
        <taxon>Caprinae</taxon>
        <taxon>Ovis</taxon>
    </lineage>
</organism>
<accession>P04653</accession>
<accession>Q69B23</accession>
<accession>Q9TS03</accession>
<accession>Q9TS48</accession>